<reference key="1">
    <citation type="journal article" date="2005" name="Science">
        <title>The transcriptional landscape of the mammalian genome.</title>
        <authorList>
            <person name="Carninci P."/>
            <person name="Kasukawa T."/>
            <person name="Katayama S."/>
            <person name="Gough J."/>
            <person name="Frith M.C."/>
            <person name="Maeda N."/>
            <person name="Oyama R."/>
            <person name="Ravasi T."/>
            <person name="Lenhard B."/>
            <person name="Wells C."/>
            <person name="Kodzius R."/>
            <person name="Shimokawa K."/>
            <person name="Bajic V.B."/>
            <person name="Brenner S.E."/>
            <person name="Batalov S."/>
            <person name="Forrest A.R."/>
            <person name="Zavolan M."/>
            <person name="Davis M.J."/>
            <person name="Wilming L.G."/>
            <person name="Aidinis V."/>
            <person name="Allen J.E."/>
            <person name="Ambesi-Impiombato A."/>
            <person name="Apweiler R."/>
            <person name="Aturaliya R.N."/>
            <person name="Bailey T.L."/>
            <person name="Bansal M."/>
            <person name="Baxter L."/>
            <person name="Beisel K.W."/>
            <person name="Bersano T."/>
            <person name="Bono H."/>
            <person name="Chalk A.M."/>
            <person name="Chiu K.P."/>
            <person name="Choudhary V."/>
            <person name="Christoffels A."/>
            <person name="Clutterbuck D.R."/>
            <person name="Crowe M.L."/>
            <person name="Dalla E."/>
            <person name="Dalrymple B.P."/>
            <person name="de Bono B."/>
            <person name="Della Gatta G."/>
            <person name="di Bernardo D."/>
            <person name="Down T."/>
            <person name="Engstrom P."/>
            <person name="Fagiolini M."/>
            <person name="Faulkner G."/>
            <person name="Fletcher C.F."/>
            <person name="Fukushima T."/>
            <person name="Furuno M."/>
            <person name="Futaki S."/>
            <person name="Gariboldi M."/>
            <person name="Georgii-Hemming P."/>
            <person name="Gingeras T.R."/>
            <person name="Gojobori T."/>
            <person name="Green R.E."/>
            <person name="Gustincich S."/>
            <person name="Harbers M."/>
            <person name="Hayashi Y."/>
            <person name="Hensch T.K."/>
            <person name="Hirokawa N."/>
            <person name="Hill D."/>
            <person name="Huminiecki L."/>
            <person name="Iacono M."/>
            <person name="Ikeo K."/>
            <person name="Iwama A."/>
            <person name="Ishikawa T."/>
            <person name="Jakt M."/>
            <person name="Kanapin A."/>
            <person name="Katoh M."/>
            <person name="Kawasawa Y."/>
            <person name="Kelso J."/>
            <person name="Kitamura H."/>
            <person name="Kitano H."/>
            <person name="Kollias G."/>
            <person name="Krishnan S.P."/>
            <person name="Kruger A."/>
            <person name="Kummerfeld S.K."/>
            <person name="Kurochkin I.V."/>
            <person name="Lareau L.F."/>
            <person name="Lazarevic D."/>
            <person name="Lipovich L."/>
            <person name="Liu J."/>
            <person name="Liuni S."/>
            <person name="McWilliam S."/>
            <person name="Madan Babu M."/>
            <person name="Madera M."/>
            <person name="Marchionni L."/>
            <person name="Matsuda H."/>
            <person name="Matsuzawa S."/>
            <person name="Miki H."/>
            <person name="Mignone F."/>
            <person name="Miyake S."/>
            <person name="Morris K."/>
            <person name="Mottagui-Tabar S."/>
            <person name="Mulder N."/>
            <person name="Nakano N."/>
            <person name="Nakauchi H."/>
            <person name="Ng P."/>
            <person name="Nilsson R."/>
            <person name="Nishiguchi S."/>
            <person name="Nishikawa S."/>
            <person name="Nori F."/>
            <person name="Ohara O."/>
            <person name="Okazaki Y."/>
            <person name="Orlando V."/>
            <person name="Pang K.C."/>
            <person name="Pavan W.J."/>
            <person name="Pavesi G."/>
            <person name="Pesole G."/>
            <person name="Petrovsky N."/>
            <person name="Piazza S."/>
            <person name="Reed J."/>
            <person name="Reid J.F."/>
            <person name="Ring B.Z."/>
            <person name="Ringwald M."/>
            <person name="Rost B."/>
            <person name="Ruan Y."/>
            <person name="Salzberg S.L."/>
            <person name="Sandelin A."/>
            <person name="Schneider C."/>
            <person name="Schoenbach C."/>
            <person name="Sekiguchi K."/>
            <person name="Semple C.A."/>
            <person name="Seno S."/>
            <person name="Sessa L."/>
            <person name="Sheng Y."/>
            <person name="Shibata Y."/>
            <person name="Shimada H."/>
            <person name="Shimada K."/>
            <person name="Silva D."/>
            <person name="Sinclair B."/>
            <person name="Sperling S."/>
            <person name="Stupka E."/>
            <person name="Sugiura K."/>
            <person name="Sultana R."/>
            <person name="Takenaka Y."/>
            <person name="Taki K."/>
            <person name="Tammoja K."/>
            <person name="Tan S.L."/>
            <person name="Tang S."/>
            <person name="Taylor M.S."/>
            <person name="Tegner J."/>
            <person name="Teichmann S.A."/>
            <person name="Ueda H.R."/>
            <person name="van Nimwegen E."/>
            <person name="Verardo R."/>
            <person name="Wei C.L."/>
            <person name="Yagi K."/>
            <person name="Yamanishi H."/>
            <person name="Zabarovsky E."/>
            <person name="Zhu S."/>
            <person name="Zimmer A."/>
            <person name="Hide W."/>
            <person name="Bult C."/>
            <person name="Grimmond S.M."/>
            <person name="Teasdale R.D."/>
            <person name="Liu E.T."/>
            <person name="Brusic V."/>
            <person name="Quackenbush J."/>
            <person name="Wahlestedt C."/>
            <person name="Mattick J.S."/>
            <person name="Hume D.A."/>
            <person name="Kai C."/>
            <person name="Sasaki D."/>
            <person name="Tomaru Y."/>
            <person name="Fukuda S."/>
            <person name="Kanamori-Katayama M."/>
            <person name="Suzuki M."/>
            <person name="Aoki J."/>
            <person name="Arakawa T."/>
            <person name="Iida J."/>
            <person name="Imamura K."/>
            <person name="Itoh M."/>
            <person name="Kato T."/>
            <person name="Kawaji H."/>
            <person name="Kawagashira N."/>
            <person name="Kawashima T."/>
            <person name="Kojima M."/>
            <person name="Kondo S."/>
            <person name="Konno H."/>
            <person name="Nakano K."/>
            <person name="Ninomiya N."/>
            <person name="Nishio T."/>
            <person name="Okada M."/>
            <person name="Plessy C."/>
            <person name="Shibata K."/>
            <person name="Shiraki T."/>
            <person name="Suzuki S."/>
            <person name="Tagami M."/>
            <person name="Waki K."/>
            <person name="Watahiki A."/>
            <person name="Okamura-Oho Y."/>
            <person name="Suzuki H."/>
            <person name="Kawai J."/>
            <person name="Hayashizaki Y."/>
        </authorList>
    </citation>
    <scope>NUCLEOTIDE SEQUENCE [LARGE SCALE MRNA]</scope>
    <source>
        <strain>C57BL/6J</strain>
        <tissue>Head</tissue>
        <tissue>Heart</tissue>
        <tissue>Kidney</tissue>
        <tissue>Liver</tissue>
        <tissue>Pancreas</tissue>
        <tissue>Small intestine</tissue>
        <tissue>Stomach</tissue>
    </source>
</reference>
<reference key="2">
    <citation type="journal article" date="2004" name="Genome Res.">
        <title>The status, quality, and expansion of the NIH full-length cDNA project: the Mammalian Gene Collection (MGC).</title>
        <authorList>
            <consortium name="The MGC Project Team"/>
        </authorList>
    </citation>
    <scope>NUCLEOTIDE SEQUENCE [LARGE SCALE MRNA]</scope>
    <source>
        <strain>C57BL/6J</strain>
        <strain>FVB/N</strain>
        <tissue>Brain</tissue>
        <tissue>Colon</tissue>
    </source>
</reference>
<reference evidence="6 7" key="3">
    <citation type="journal article" date="2022" name="Nature">
        <title>A male germ-cell-specific ribosome controls male fertility.</title>
        <authorList>
            <person name="Li H."/>
            <person name="Huo Y."/>
            <person name="He X."/>
            <person name="Yao L."/>
            <person name="Zhang H."/>
            <person name="Cui Y."/>
            <person name="Xiao H."/>
            <person name="Xie W."/>
            <person name="Zhang D."/>
            <person name="Wang Y."/>
            <person name="Zhang S."/>
            <person name="Tu H."/>
            <person name="Cheng Y."/>
            <person name="Guo Y."/>
            <person name="Cao X."/>
            <person name="Zhu Y."/>
            <person name="Jiang T."/>
            <person name="Guo X."/>
            <person name="Qin Y."/>
            <person name="Sha J."/>
        </authorList>
    </citation>
    <scope>STRUCTURE BY ELECTRON MICROSCOPY (3.03 ANGSTROMS) OF RIBOSOME</scope>
    <scope>FUNCTION</scope>
    <scope>SUBUNIT</scope>
    <scope>SUBCELLULAR LOCATION</scope>
</reference>
<dbReference type="EMBL" id="AK002592">
    <property type="protein sequence ID" value="BAB22213.1"/>
    <property type="molecule type" value="mRNA"/>
</dbReference>
<dbReference type="EMBL" id="AK008563">
    <property type="protein sequence ID" value="BAB25746.1"/>
    <property type="molecule type" value="mRNA"/>
</dbReference>
<dbReference type="EMBL" id="AK011101">
    <property type="protein sequence ID" value="BAB27398.1"/>
    <property type="molecule type" value="mRNA"/>
</dbReference>
<dbReference type="EMBL" id="AK012544">
    <property type="protein sequence ID" value="BAB28307.1"/>
    <property type="molecule type" value="mRNA"/>
</dbReference>
<dbReference type="EMBL" id="AK014003">
    <property type="protein sequence ID" value="BAB29108.1"/>
    <property type="molecule type" value="mRNA"/>
</dbReference>
<dbReference type="EMBL" id="AK019020">
    <property type="protein sequence ID" value="BAB31512.1"/>
    <property type="molecule type" value="mRNA"/>
</dbReference>
<dbReference type="EMBL" id="AK019294">
    <property type="protein sequence ID" value="BAB31652.1"/>
    <property type="molecule type" value="mRNA"/>
</dbReference>
<dbReference type="EMBL" id="AK028138">
    <property type="protein sequence ID" value="BAC25766.1"/>
    <property type="molecule type" value="mRNA"/>
</dbReference>
<dbReference type="EMBL" id="AK168550">
    <property type="protein sequence ID" value="BAE40425.1"/>
    <property type="molecule type" value="mRNA"/>
</dbReference>
<dbReference type="EMBL" id="BC054388">
    <property type="protein sequence ID" value="AAH54388.1"/>
    <property type="molecule type" value="mRNA"/>
</dbReference>
<dbReference type="EMBL" id="BC081438">
    <property type="protein sequence ID" value="AAH81438.1"/>
    <property type="molecule type" value="mRNA"/>
</dbReference>
<dbReference type="CCDS" id="CCDS37027.1"/>
<dbReference type="RefSeq" id="NP_001258519.1">
    <property type="nucleotide sequence ID" value="NM_001271590.1"/>
</dbReference>
<dbReference type="RefSeq" id="NP_001258520.1">
    <property type="nucleotide sequence ID" value="NM_001271591.1"/>
</dbReference>
<dbReference type="RefSeq" id="NP_080345.1">
    <property type="nucleotide sequence ID" value="NM_026069.4"/>
</dbReference>
<dbReference type="PDB" id="6SWA">
    <property type="method" value="EM"/>
    <property type="resolution" value="3.10 A"/>
    <property type="chains" value="h=1-97"/>
</dbReference>
<dbReference type="PDB" id="7CPU">
    <property type="method" value="EM"/>
    <property type="resolution" value="2.82 A"/>
    <property type="chains" value="Lj=1-97"/>
</dbReference>
<dbReference type="PDB" id="7CPV">
    <property type="method" value="EM"/>
    <property type="resolution" value="3.03 A"/>
    <property type="chains" value="Lj=1-97"/>
</dbReference>
<dbReference type="PDB" id="7LS1">
    <property type="method" value="EM"/>
    <property type="resolution" value="3.30 A"/>
    <property type="chains" value="d2=1-97"/>
</dbReference>
<dbReference type="PDB" id="7LS2">
    <property type="method" value="EM"/>
    <property type="resolution" value="3.10 A"/>
    <property type="chains" value="d2=1-97"/>
</dbReference>
<dbReference type="PDBsum" id="6SWA"/>
<dbReference type="PDBsum" id="7CPU"/>
<dbReference type="PDBsum" id="7CPV"/>
<dbReference type="PDBsum" id="7LS1"/>
<dbReference type="PDBsum" id="7LS2"/>
<dbReference type="EMDB" id="EMD-10321"/>
<dbReference type="EMDB" id="EMD-23500"/>
<dbReference type="EMDB" id="EMD-23501"/>
<dbReference type="EMDB" id="EMD-30432"/>
<dbReference type="EMDB" id="EMD-30433"/>
<dbReference type="SMR" id="Q9D823"/>
<dbReference type="BioGRID" id="1639134">
    <property type="interactions" value="2"/>
</dbReference>
<dbReference type="BioGRID" id="212070">
    <property type="interactions" value="5"/>
</dbReference>
<dbReference type="ComplexPortal" id="CPX-5262">
    <property type="entry name" value="60S cytosolic large ribosomal subunit"/>
</dbReference>
<dbReference type="ComplexPortal" id="CPX-7662">
    <property type="entry name" value="60S cytosolic large ribosomal subunit, testis-specific variant"/>
</dbReference>
<dbReference type="ComplexPortal" id="CPX-7663">
    <property type="entry name" value="60S cytosolic large ribosomal subunit, striated muscle variant"/>
</dbReference>
<dbReference type="FunCoup" id="Q9D823">
    <property type="interactions" value="519"/>
</dbReference>
<dbReference type="STRING" id="10090.ENSMUSP00000046506"/>
<dbReference type="GlyGen" id="Q9D823">
    <property type="glycosylation" value="1 site, 1 O-linked glycan (1 site)"/>
</dbReference>
<dbReference type="iPTMnet" id="Q9D823"/>
<dbReference type="PhosphoSitePlus" id="Q9D823"/>
<dbReference type="SwissPalm" id="Q9D823"/>
<dbReference type="jPOST" id="Q9D823"/>
<dbReference type="PaxDb" id="10090-ENSMUSP00000046506"/>
<dbReference type="PeptideAtlas" id="Q9D823"/>
<dbReference type="ProteomicsDB" id="300488"/>
<dbReference type="TopDownProteomics" id="Q9D823"/>
<dbReference type="Antibodypedia" id="23151">
    <property type="antibodies" value="137 antibodies from 23 providers"/>
</dbReference>
<dbReference type="DNASU" id="67281"/>
<dbReference type="Ensembl" id="ENSMUST00000045356.9">
    <property type="protein sequence ID" value="ENSMUSP00000046506.8"/>
    <property type="gene ID" value="ENSMUSG00000041841.9"/>
</dbReference>
<dbReference type="GeneID" id="100502825"/>
<dbReference type="GeneID" id="67281"/>
<dbReference type="KEGG" id="mmu:100502825"/>
<dbReference type="KEGG" id="mmu:67281"/>
<dbReference type="UCSC" id="uc007vcs.2">
    <property type="organism name" value="mouse"/>
</dbReference>
<dbReference type="AGR" id="MGI:1914531"/>
<dbReference type="AGR" id="MGI:3651519"/>
<dbReference type="CTD" id="100502825"/>
<dbReference type="CTD" id="6167"/>
<dbReference type="MGI" id="MGI:1914531">
    <property type="gene designation" value="Rpl37"/>
</dbReference>
<dbReference type="MGI" id="MGI:3651519">
    <property type="gene designation" value="Rpl37rt"/>
</dbReference>
<dbReference type="VEuPathDB" id="HostDB:ENSMUSG00000041841"/>
<dbReference type="eggNOG" id="KOG3475">
    <property type="taxonomic scope" value="Eukaryota"/>
</dbReference>
<dbReference type="GeneTree" id="ENSGT00390000005254"/>
<dbReference type="HOGENOM" id="CLU_150908_0_0_1"/>
<dbReference type="InParanoid" id="Q9D823"/>
<dbReference type="OMA" id="RMAYLKH"/>
<dbReference type="OrthoDB" id="10259236at2759"/>
<dbReference type="PhylomeDB" id="Q9D823"/>
<dbReference type="TreeFam" id="TF300260"/>
<dbReference type="Reactome" id="R-MMU-156827">
    <property type="pathway name" value="L13a-mediated translational silencing of Ceruloplasmin expression"/>
</dbReference>
<dbReference type="Reactome" id="R-MMU-1799339">
    <property type="pathway name" value="SRP-dependent cotranslational protein targeting to membrane"/>
</dbReference>
<dbReference type="Reactome" id="R-MMU-6791226">
    <property type="pathway name" value="Major pathway of rRNA processing in the nucleolus and cytosol"/>
</dbReference>
<dbReference type="Reactome" id="R-MMU-72689">
    <property type="pathway name" value="Formation of a pool of free 40S subunits"/>
</dbReference>
<dbReference type="Reactome" id="R-MMU-72706">
    <property type="pathway name" value="GTP hydrolysis and joining of the 60S ribosomal subunit"/>
</dbReference>
<dbReference type="Reactome" id="R-MMU-975956">
    <property type="pathway name" value="Nonsense Mediated Decay (NMD) independent of the Exon Junction Complex (EJC)"/>
</dbReference>
<dbReference type="Reactome" id="R-MMU-975957">
    <property type="pathway name" value="Nonsense Mediated Decay (NMD) enhanced by the Exon Junction Complex (EJC)"/>
</dbReference>
<dbReference type="BioGRID-ORCS" id="100502825">
    <property type="hits" value="4 hits in 10 CRISPR screens"/>
</dbReference>
<dbReference type="BioGRID-ORCS" id="67281">
    <property type="hits" value="28 hits in 75 CRISPR screens"/>
</dbReference>
<dbReference type="ChiTaRS" id="Rpl37">
    <property type="organism name" value="mouse"/>
</dbReference>
<dbReference type="PRO" id="PR:Q9D823"/>
<dbReference type="Proteomes" id="UP000000589">
    <property type="component" value="Chromosome 15"/>
</dbReference>
<dbReference type="RNAct" id="Q9D823">
    <property type="molecule type" value="protein"/>
</dbReference>
<dbReference type="Bgee" id="ENSMUSG00000041841">
    <property type="expression patterns" value="Expressed in mesodermal cell in embryo and 154 other cell types or tissues"/>
</dbReference>
<dbReference type="GO" id="GO:0005737">
    <property type="term" value="C:cytoplasm"/>
    <property type="evidence" value="ECO:0000314"/>
    <property type="project" value="ComplexPortal"/>
</dbReference>
<dbReference type="GO" id="GO:0005829">
    <property type="term" value="C:cytosol"/>
    <property type="evidence" value="ECO:0000304"/>
    <property type="project" value="Reactome"/>
</dbReference>
<dbReference type="GO" id="GO:0022625">
    <property type="term" value="C:cytosolic large ribosomal subunit"/>
    <property type="evidence" value="ECO:0000314"/>
    <property type="project" value="UniProtKB"/>
</dbReference>
<dbReference type="GO" id="GO:0098794">
    <property type="term" value="C:postsynapse"/>
    <property type="evidence" value="ECO:0000303"/>
    <property type="project" value="SynGO"/>
</dbReference>
<dbReference type="GO" id="GO:0098793">
    <property type="term" value="C:presynapse"/>
    <property type="evidence" value="ECO:0000303"/>
    <property type="project" value="SynGO"/>
</dbReference>
<dbReference type="GO" id="GO:0005840">
    <property type="term" value="C:ribosome"/>
    <property type="evidence" value="ECO:0000303"/>
    <property type="project" value="SynGO"/>
</dbReference>
<dbReference type="GO" id="GO:0045202">
    <property type="term" value="C:synapse"/>
    <property type="evidence" value="ECO:0000314"/>
    <property type="project" value="SynGO"/>
</dbReference>
<dbReference type="GO" id="GO:0097371">
    <property type="term" value="F:MDM2/MDM4 family protein binding"/>
    <property type="evidence" value="ECO:0007669"/>
    <property type="project" value="Ensembl"/>
</dbReference>
<dbReference type="GO" id="GO:0019843">
    <property type="term" value="F:rRNA binding"/>
    <property type="evidence" value="ECO:0007669"/>
    <property type="project" value="UniProtKB-KW"/>
</dbReference>
<dbReference type="GO" id="GO:0003735">
    <property type="term" value="F:structural constituent of ribosome"/>
    <property type="evidence" value="ECO:0000314"/>
    <property type="project" value="UniProtKB"/>
</dbReference>
<dbReference type="GO" id="GO:1990948">
    <property type="term" value="F:ubiquitin ligase inhibitor activity"/>
    <property type="evidence" value="ECO:0007669"/>
    <property type="project" value="Ensembl"/>
</dbReference>
<dbReference type="GO" id="GO:0008270">
    <property type="term" value="F:zinc ion binding"/>
    <property type="evidence" value="ECO:0007669"/>
    <property type="project" value="UniProtKB-KW"/>
</dbReference>
<dbReference type="GO" id="GO:0002181">
    <property type="term" value="P:cytoplasmic translation"/>
    <property type="evidence" value="ECO:0000303"/>
    <property type="project" value="ComplexPortal"/>
</dbReference>
<dbReference type="GO" id="GO:1901798">
    <property type="term" value="P:positive regulation of signal transduction by p53 class mediator"/>
    <property type="evidence" value="ECO:0007669"/>
    <property type="project" value="Ensembl"/>
</dbReference>
<dbReference type="GO" id="GO:0140242">
    <property type="term" value="P:translation at postsynapse"/>
    <property type="evidence" value="ECO:0000303"/>
    <property type="project" value="SynGO"/>
</dbReference>
<dbReference type="GO" id="GO:0140236">
    <property type="term" value="P:translation at presynapse"/>
    <property type="evidence" value="ECO:0000303"/>
    <property type="project" value="SynGO"/>
</dbReference>
<dbReference type="FunFam" id="2.20.25.30:FF:000001">
    <property type="entry name" value="Ribosomal protein L37"/>
    <property type="match status" value="1"/>
</dbReference>
<dbReference type="Gene3D" id="2.20.25.30">
    <property type="match status" value="1"/>
</dbReference>
<dbReference type="HAMAP" id="MF_00547">
    <property type="entry name" value="Ribosomal_eL37"/>
    <property type="match status" value="1"/>
</dbReference>
<dbReference type="InterPro" id="IPR001569">
    <property type="entry name" value="Ribosomal_eL37"/>
</dbReference>
<dbReference type="InterPro" id="IPR011331">
    <property type="entry name" value="Ribosomal_eL37/eL43"/>
</dbReference>
<dbReference type="InterPro" id="IPR018267">
    <property type="entry name" value="Ribosomal_eL37_CS"/>
</dbReference>
<dbReference type="InterPro" id="IPR011332">
    <property type="entry name" value="Ribosomal_zn-bd"/>
</dbReference>
<dbReference type="PANTHER" id="PTHR10768">
    <property type="entry name" value="60S RIBOSOMAL PROTEIN L37"/>
    <property type="match status" value="1"/>
</dbReference>
<dbReference type="PANTHER" id="PTHR10768:SF22">
    <property type="entry name" value="LARGE RIBOSOMAL SUBUNIT PROTEIN EL37"/>
    <property type="match status" value="1"/>
</dbReference>
<dbReference type="Pfam" id="PF01907">
    <property type="entry name" value="Ribosomal_L37e"/>
    <property type="match status" value="1"/>
</dbReference>
<dbReference type="SUPFAM" id="SSF57829">
    <property type="entry name" value="Zn-binding ribosomal proteins"/>
    <property type="match status" value="1"/>
</dbReference>
<dbReference type="PROSITE" id="PS01077">
    <property type="entry name" value="RIBOSOMAL_L37E"/>
    <property type="match status" value="1"/>
</dbReference>
<proteinExistence type="evidence at protein level"/>
<protein>
    <recommendedName>
        <fullName evidence="5">Large ribosomal subunit protein eL37</fullName>
    </recommendedName>
    <alternativeName>
        <fullName>60S ribosomal protein L37</fullName>
    </alternativeName>
</protein>
<comment type="function">
    <text evidence="4">Component of the large ribosomal subunit (PubMed:36517592). The ribosome is a large ribonucleoprotein complex responsible for the synthesis of proteins in the cell (PubMed:36517592).</text>
</comment>
<comment type="subunit">
    <text evidence="4">Component of the large ribosomal subunit.</text>
</comment>
<comment type="subcellular location">
    <subcellularLocation>
        <location evidence="4">Cytoplasm</location>
    </subcellularLocation>
</comment>
<comment type="similarity">
    <text evidence="5">Belongs to the eukaryotic ribosomal protein eL37 family.</text>
</comment>
<gene>
    <name type="primary">Rpl37</name>
</gene>
<feature type="chain" id="PRO_0000139706" description="Large ribosomal subunit protein eL37">
    <location>
        <begin position="1"/>
        <end position="97"/>
    </location>
</feature>
<feature type="zinc finger region" description="C4-type" evidence="3">
    <location>
        <begin position="19"/>
        <end position="37"/>
    </location>
</feature>
<feature type="binding site" evidence="1">
    <location>
        <position position="19"/>
    </location>
    <ligand>
        <name>Zn(2+)</name>
        <dbReference type="ChEBI" id="CHEBI:29105"/>
    </ligand>
</feature>
<feature type="binding site" evidence="1">
    <location>
        <position position="22"/>
    </location>
    <ligand>
        <name>Zn(2+)</name>
        <dbReference type="ChEBI" id="CHEBI:29105"/>
    </ligand>
</feature>
<feature type="binding site" evidence="1">
    <location>
        <position position="34"/>
    </location>
    <ligand>
        <name>Zn(2+)</name>
        <dbReference type="ChEBI" id="CHEBI:29105"/>
    </ligand>
</feature>
<feature type="binding site" evidence="1">
    <location>
        <position position="37"/>
    </location>
    <ligand>
        <name>Zn(2+)</name>
        <dbReference type="ChEBI" id="CHEBI:29105"/>
    </ligand>
</feature>
<feature type="modified residue" description="N6-acetyllysine" evidence="2">
    <location>
        <position position="10"/>
    </location>
</feature>
<feature type="modified residue" description="Phosphoserine" evidence="2">
    <location>
        <position position="96"/>
    </location>
</feature>
<feature type="modified residue" description="Phosphoserine" evidence="2">
    <location>
        <position position="97"/>
    </location>
</feature>
<feature type="sequence conflict" description="In Ref. 1; BAB25746." evidence="5" ref="1">
    <original>T</original>
    <variation>R</variation>
    <location>
        <position position="17"/>
    </location>
</feature>
<organism>
    <name type="scientific">Mus musculus</name>
    <name type="common">Mouse</name>
    <dbReference type="NCBI Taxonomy" id="10090"/>
    <lineage>
        <taxon>Eukaryota</taxon>
        <taxon>Metazoa</taxon>
        <taxon>Chordata</taxon>
        <taxon>Craniata</taxon>
        <taxon>Vertebrata</taxon>
        <taxon>Euteleostomi</taxon>
        <taxon>Mammalia</taxon>
        <taxon>Eutheria</taxon>
        <taxon>Euarchontoglires</taxon>
        <taxon>Glires</taxon>
        <taxon>Rodentia</taxon>
        <taxon>Myomorpha</taxon>
        <taxon>Muroidea</taxon>
        <taxon>Muridae</taxon>
        <taxon>Murinae</taxon>
        <taxon>Mus</taxon>
        <taxon>Mus</taxon>
    </lineage>
</organism>
<sequence>MTKGTSSFGKRRNKTHTLCRRCGSKAYHLQKSTCGKCGYPAKRKRKYNWSAKAKRRNTTGTGRMRHLKIVYRRFRHGFREGTTPKPKRAAVAASSSS</sequence>
<evidence type="ECO:0000250" key="1">
    <source>
        <dbReference type="UniProtKB" id="P49166"/>
    </source>
</evidence>
<evidence type="ECO:0000250" key="2">
    <source>
        <dbReference type="UniProtKB" id="P61927"/>
    </source>
</evidence>
<evidence type="ECO:0000255" key="3"/>
<evidence type="ECO:0000269" key="4">
    <source>
    </source>
</evidence>
<evidence type="ECO:0000305" key="5"/>
<evidence type="ECO:0007744" key="6">
    <source>
        <dbReference type="PDB" id="7CPU"/>
    </source>
</evidence>
<evidence type="ECO:0007744" key="7">
    <source>
        <dbReference type="PDB" id="7CPV"/>
    </source>
</evidence>
<keyword id="KW-0002">3D-structure</keyword>
<keyword id="KW-0007">Acetylation</keyword>
<keyword id="KW-0963">Cytoplasm</keyword>
<keyword id="KW-0479">Metal-binding</keyword>
<keyword id="KW-0597">Phosphoprotein</keyword>
<keyword id="KW-1185">Reference proteome</keyword>
<keyword id="KW-0687">Ribonucleoprotein</keyword>
<keyword id="KW-0689">Ribosomal protein</keyword>
<keyword id="KW-0694">RNA-binding</keyword>
<keyword id="KW-0699">rRNA-binding</keyword>
<keyword id="KW-0862">Zinc</keyword>
<keyword id="KW-0863">Zinc-finger</keyword>
<accession>Q9D823</accession>
<accession>Q6ZWV1</accession>
<name>RL37_MOUSE</name>